<proteinExistence type="inferred from homology"/>
<dbReference type="EMBL" id="CP000680">
    <property type="protein sequence ID" value="ABP84393.1"/>
    <property type="molecule type" value="Genomic_DNA"/>
</dbReference>
<dbReference type="SMR" id="A4XSS7"/>
<dbReference type="STRING" id="399739.Pmen_1629"/>
<dbReference type="KEGG" id="pmy:Pmen_1629"/>
<dbReference type="eggNOG" id="COG0236">
    <property type="taxonomic scope" value="Bacteria"/>
</dbReference>
<dbReference type="HOGENOM" id="CLU_108696_5_1_6"/>
<dbReference type="OrthoDB" id="9804551at2"/>
<dbReference type="UniPathway" id="UPA00094"/>
<dbReference type="GO" id="GO:0005829">
    <property type="term" value="C:cytosol"/>
    <property type="evidence" value="ECO:0007669"/>
    <property type="project" value="TreeGrafter"/>
</dbReference>
<dbReference type="GO" id="GO:0016020">
    <property type="term" value="C:membrane"/>
    <property type="evidence" value="ECO:0007669"/>
    <property type="project" value="GOC"/>
</dbReference>
<dbReference type="GO" id="GO:0000035">
    <property type="term" value="F:acyl binding"/>
    <property type="evidence" value="ECO:0007669"/>
    <property type="project" value="TreeGrafter"/>
</dbReference>
<dbReference type="GO" id="GO:0000036">
    <property type="term" value="F:acyl carrier activity"/>
    <property type="evidence" value="ECO:0007669"/>
    <property type="project" value="UniProtKB-UniRule"/>
</dbReference>
<dbReference type="GO" id="GO:0031177">
    <property type="term" value="F:phosphopantetheine binding"/>
    <property type="evidence" value="ECO:0007669"/>
    <property type="project" value="InterPro"/>
</dbReference>
<dbReference type="GO" id="GO:0009245">
    <property type="term" value="P:lipid A biosynthetic process"/>
    <property type="evidence" value="ECO:0007669"/>
    <property type="project" value="TreeGrafter"/>
</dbReference>
<dbReference type="FunFam" id="1.10.1200.10:FF:000001">
    <property type="entry name" value="Acyl carrier protein"/>
    <property type="match status" value="1"/>
</dbReference>
<dbReference type="Gene3D" id="1.10.1200.10">
    <property type="entry name" value="ACP-like"/>
    <property type="match status" value="1"/>
</dbReference>
<dbReference type="HAMAP" id="MF_01217">
    <property type="entry name" value="Acyl_carrier"/>
    <property type="match status" value="1"/>
</dbReference>
<dbReference type="InterPro" id="IPR003231">
    <property type="entry name" value="ACP"/>
</dbReference>
<dbReference type="InterPro" id="IPR036736">
    <property type="entry name" value="ACP-like_sf"/>
</dbReference>
<dbReference type="InterPro" id="IPR020806">
    <property type="entry name" value="PKS_PP-bd"/>
</dbReference>
<dbReference type="InterPro" id="IPR009081">
    <property type="entry name" value="PP-bd_ACP"/>
</dbReference>
<dbReference type="InterPro" id="IPR006162">
    <property type="entry name" value="Ppantetheine_attach_site"/>
</dbReference>
<dbReference type="NCBIfam" id="TIGR00517">
    <property type="entry name" value="acyl_carrier"/>
    <property type="match status" value="1"/>
</dbReference>
<dbReference type="NCBIfam" id="NF002148">
    <property type="entry name" value="PRK00982.1-2"/>
    <property type="match status" value="1"/>
</dbReference>
<dbReference type="NCBIfam" id="NF002149">
    <property type="entry name" value="PRK00982.1-3"/>
    <property type="match status" value="1"/>
</dbReference>
<dbReference type="NCBIfam" id="NF002150">
    <property type="entry name" value="PRK00982.1-4"/>
    <property type="match status" value="1"/>
</dbReference>
<dbReference type="NCBIfam" id="NF002151">
    <property type="entry name" value="PRK00982.1-5"/>
    <property type="match status" value="1"/>
</dbReference>
<dbReference type="PANTHER" id="PTHR20863">
    <property type="entry name" value="ACYL CARRIER PROTEIN"/>
    <property type="match status" value="1"/>
</dbReference>
<dbReference type="PANTHER" id="PTHR20863:SF76">
    <property type="entry name" value="CARRIER DOMAIN-CONTAINING PROTEIN"/>
    <property type="match status" value="1"/>
</dbReference>
<dbReference type="Pfam" id="PF00550">
    <property type="entry name" value="PP-binding"/>
    <property type="match status" value="1"/>
</dbReference>
<dbReference type="SMART" id="SM00823">
    <property type="entry name" value="PKS_PP"/>
    <property type="match status" value="1"/>
</dbReference>
<dbReference type="SUPFAM" id="SSF47336">
    <property type="entry name" value="ACP-like"/>
    <property type="match status" value="1"/>
</dbReference>
<dbReference type="PROSITE" id="PS50075">
    <property type="entry name" value="CARRIER"/>
    <property type="match status" value="1"/>
</dbReference>
<dbReference type="PROSITE" id="PS00012">
    <property type="entry name" value="PHOSPHOPANTETHEINE"/>
    <property type="match status" value="1"/>
</dbReference>
<protein>
    <recommendedName>
        <fullName evidence="1">Acyl carrier protein</fullName>
        <shortName evidence="1">ACP</shortName>
    </recommendedName>
</protein>
<keyword id="KW-0963">Cytoplasm</keyword>
<keyword id="KW-0275">Fatty acid biosynthesis</keyword>
<keyword id="KW-0276">Fatty acid metabolism</keyword>
<keyword id="KW-0444">Lipid biosynthesis</keyword>
<keyword id="KW-0443">Lipid metabolism</keyword>
<keyword id="KW-0596">Phosphopantetheine</keyword>
<keyword id="KW-0597">Phosphoprotein</keyword>
<sequence length="78" mass="8672">MSTIEERVKKIVAEQLGVKEEEVTNSASFVEDLGADSLDTVELVMALEEEFETEIPDEQAEKITTVQEAIDYVTAHAQ</sequence>
<organism>
    <name type="scientific">Ectopseudomonas mendocina (strain ymp)</name>
    <name type="common">Pseudomonas mendocina</name>
    <dbReference type="NCBI Taxonomy" id="399739"/>
    <lineage>
        <taxon>Bacteria</taxon>
        <taxon>Pseudomonadati</taxon>
        <taxon>Pseudomonadota</taxon>
        <taxon>Gammaproteobacteria</taxon>
        <taxon>Pseudomonadales</taxon>
        <taxon>Pseudomonadaceae</taxon>
        <taxon>Ectopseudomonas</taxon>
    </lineage>
</organism>
<feature type="chain" id="PRO_1000066661" description="Acyl carrier protein">
    <location>
        <begin position="1"/>
        <end position="78"/>
    </location>
</feature>
<feature type="domain" description="Carrier" evidence="2">
    <location>
        <begin position="2"/>
        <end position="77"/>
    </location>
</feature>
<feature type="modified residue" description="O-(pantetheine 4'-phosphoryl)serine" evidence="2">
    <location>
        <position position="37"/>
    </location>
</feature>
<reference key="1">
    <citation type="submission" date="2007-04" db="EMBL/GenBank/DDBJ databases">
        <title>Complete sequence of Pseudomonas mendocina ymp.</title>
        <authorList>
            <consortium name="US DOE Joint Genome Institute"/>
            <person name="Copeland A."/>
            <person name="Lucas S."/>
            <person name="Lapidus A."/>
            <person name="Barry K."/>
            <person name="Glavina del Rio T."/>
            <person name="Dalin E."/>
            <person name="Tice H."/>
            <person name="Pitluck S."/>
            <person name="Kiss H."/>
            <person name="Brettin T."/>
            <person name="Detter J.C."/>
            <person name="Bruce D."/>
            <person name="Han C."/>
            <person name="Schmutz J."/>
            <person name="Larimer F."/>
            <person name="Land M."/>
            <person name="Hauser L."/>
            <person name="Kyrpides N."/>
            <person name="Mikhailova N."/>
            <person name="Hersman L."/>
            <person name="Dubois J."/>
            <person name="Maurice P."/>
            <person name="Richardson P."/>
        </authorList>
    </citation>
    <scope>NUCLEOTIDE SEQUENCE [LARGE SCALE GENOMIC DNA]</scope>
    <source>
        <strain>ymp</strain>
    </source>
</reference>
<evidence type="ECO:0000255" key="1">
    <source>
        <dbReference type="HAMAP-Rule" id="MF_01217"/>
    </source>
</evidence>
<evidence type="ECO:0000255" key="2">
    <source>
        <dbReference type="PROSITE-ProRule" id="PRU00258"/>
    </source>
</evidence>
<comment type="function">
    <text evidence="1">Carrier of the growing fatty acid chain in fatty acid biosynthesis.</text>
</comment>
<comment type="pathway">
    <text evidence="1">Lipid metabolism; fatty acid biosynthesis.</text>
</comment>
<comment type="subcellular location">
    <subcellularLocation>
        <location evidence="1">Cytoplasm</location>
    </subcellularLocation>
</comment>
<comment type="PTM">
    <text evidence="1">4'-phosphopantetheine is transferred from CoA to a specific serine of apo-ACP by AcpS. This modification is essential for activity because fatty acids are bound in thioester linkage to the sulfhydryl of the prosthetic group.</text>
</comment>
<comment type="similarity">
    <text evidence="1">Belongs to the acyl carrier protein (ACP) family.</text>
</comment>
<accession>A4XSS7</accession>
<gene>
    <name evidence="1" type="primary">acpP</name>
    <name type="ordered locus">Pmen_1629</name>
</gene>
<name>ACP_ECTM1</name>